<comment type="function">
    <text evidence="1">Component of the ESCRT-I complex, a regulator of vesicular trafficking process. Required for the sorting of endocytic ubiquitinated cargos into multivesicular bodies (By similarity).</text>
</comment>
<comment type="subunit">
    <text evidence="1">Component of the ESCRT-I complex (endosomal sorting complex required for transport I).</text>
</comment>
<comment type="subcellular location">
    <subcellularLocation>
        <location evidence="1">Cytoplasm</location>
    </subcellularLocation>
    <subcellularLocation>
        <location evidence="1">Endosome</location>
    </subcellularLocation>
    <subcellularLocation>
        <location evidence="1">Late endosome membrane</location>
        <topology evidence="1">Peripheral membrane protein</topology>
    </subcellularLocation>
    <text evidence="1">Colocalizes with F-actin.</text>
</comment>
<comment type="similarity">
    <text evidence="4">Belongs to the MVB12 family.</text>
</comment>
<reference key="1">
    <citation type="journal article" date="2005" name="Genome Biol.">
        <title>Full-length cDNAs from chicken bursal lymphocytes to facilitate gene function analysis.</title>
        <authorList>
            <person name="Caldwell R.B."/>
            <person name="Kierzek A.M."/>
            <person name="Arakawa H."/>
            <person name="Bezzubov Y."/>
            <person name="Zaim J."/>
            <person name="Fiedler P."/>
            <person name="Kutter S."/>
            <person name="Blagodatski A."/>
            <person name="Kostovska D."/>
            <person name="Koter M."/>
            <person name="Plachy J."/>
            <person name="Carninci P."/>
            <person name="Hayashizaki Y."/>
            <person name="Buerstedde J.-M."/>
        </authorList>
    </citation>
    <scope>NUCLEOTIDE SEQUENCE [LARGE SCALE MRNA]</scope>
    <source>
        <strain>CB</strain>
        <tissue>Bursa of Fabricius</tissue>
    </source>
</reference>
<proteinExistence type="evidence at transcript level"/>
<organism>
    <name type="scientific">Gallus gallus</name>
    <name type="common">Chicken</name>
    <dbReference type="NCBI Taxonomy" id="9031"/>
    <lineage>
        <taxon>Eukaryota</taxon>
        <taxon>Metazoa</taxon>
        <taxon>Chordata</taxon>
        <taxon>Craniata</taxon>
        <taxon>Vertebrata</taxon>
        <taxon>Euteleostomi</taxon>
        <taxon>Archelosauria</taxon>
        <taxon>Archosauria</taxon>
        <taxon>Dinosauria</taxon>
        <taxon>Saurischia</taxon>
        <taxon>Theropoda</taxon>
        <taxon>Coelurosauria</taxon>
        <taxon>Aves</taxon>
        <taxon>Neognathae</taxon>
        <taxon>Galloanserae</taxon>
        <taxon>Galliformes</taxon>
        <taxon>Phasianidae</taxon>
        <taxon>Phasianinae</taxon>
        <taxon>Gallus</taxon>
    </lineage>
</organism>
<name>MB12A_CHICK</name>
<sequence length="267" mass="28063">MAAEEEAAPLSGVGWAAGPESAPAGWSVITISVEGSAANLGKGFGHKGGYLCVSTAAPGSAGPVVTDVQVLSDRNPQPAGYSRAPEFPEPRSGVSRKKRLYVRLQPRGAAETAVFDIKLSGKSRAVPQYMKIGEIGSFAIWCKKGALPQCSPPPVPKPRTVSLGLKQLSLADSEQQAPGKPVAQSGSRHASFTLHNSADDGSSIYNLSAMDGVPFTLHPKFERSPKSDSSAILTDLTVKSLADIEKEYNYTFVVERTAAARLPPSIC</sequence>
<feature type="chain" id="PRO_0000249072" description="Multivesicular body subunit 12A">
    <location>
        <begin position="1"/>
        <end position="267"/>
    </location>
</feature>
<feature type="domain" description="MABP" evidence="3">
    <location>
        <begin position="7"/>
        <end position="146"/>
    </location>
</feature>
<feature type="domain" description="UMA" evidence="2">
    <location>
        <begin position="210"/>
        <end position="259"/>
    </location>
</feature>
<feature type="short sequence motif" description="SH3-binding">
    <location>
        <begin position="154"/>
        <end position="159"/>
    </location>
</feature>
<accession>Q5ZJX7</accession>
<evidence type="ECO:0000250" key="1"/>
<evidence type="ECO:0000255" key="2">
    <source>
        <dbReference type="PROSITE-ProRule" id="PRU00830"/>
    </source>
</evidence>
<evidence type="ECO:0000255" key="3">
    <source>
        <dbReference type="PROSITE-ProRule" id="PRU00831"/>
    </source>
</evidence>
<evidence type="ECO:0000305" key="4"/>
<gene>
    <name type="primary">MVB12A</name>
    <name type="synonym">FAM125A</name>
    <name type="ORF">RCJMB04_14j17</name>
</gene>
<dbReference type="EMBL" id="AJ720307">
    <property type="protein sequence ID" value="CAG31966.1"/>
    <property type="molecule type" value="mRNA"/>
</dbReference>
<dbReference type="RefSeq" id="NP_001026526.1">
    <property type="nucleotide sequence ID" value="NM_001031355.1"/>
</dbReference>
<dbReference type="SMR" id="Q5ZJX7"/>
<dbReference type="FunCoup" id="Q5ZJX7">
    <property type="interactions" value="678"/>
</dbReference>
<dbReference type="STRING" id="9031.ENSGALP00000044401"/>
<dbReference type="PaxDb" id="9031-ENSGALP00000029145"/>
<dbReference type="KEGG" id="gga:426089"/>
<dbReference type="VEuPathDB" id="HostDB:geneid_426089"/>
<dbReference type="eggNOG" id="KOG4000">
    <property type="taxonomic scope" value="Eukaryota"/>
</dbReference>
<dbReference type="InParanoid" id="Q5ZJX7"/>
<dbReference type="OrthoDB" id="6021306at2759"/>
<dbReference type="PhylomeDB" id="Q5ZJX7"/>
<dbReference type="PRO" id="PR:Q5ZJX7"/>
<dbReference type="Proteomes" id="UP000000539">
    <property type="component" value="Unassembled WGS sequence"/>
</dbReference>
<dbReference type="GO" id="GO:0005829">
    <property type="term" value="C:cytosol"/>
    <property type="evidence" value="ECO:0000318"/>
    <property type="project" value="GO_Central"/>
</dbReference>
<dbReference type="GO" id="GO:0000813">
    <property type="term" value="C:ESCRT I complex"/>
    <property type="evidence" value="ECO:0000318"/>
    <property type="project" value="GO_Central"/>
</dbReference>
<dbReference type="GO" id="GO:0031902">
    <property type="term" value="C:late endosome membrane"/>
    <property type="evidence" value="ECO:0007669"/>
    <property type="project" value="UniProtKB-SubCell"/>
</dbReference>
<dbReference type="GO" id="GO:0017124">
    <property type="term" value="F:SH3 domain binding"/>
    <property type="evidence" value="ECO:0007669"/>
    <property type="project" value="UniProtKB-KW"/>
</dbReference>
<dbReference type="GO" id="GO:0032510">
    <property type="term" value="P:endosome to lysosome transport via multivesicular body sorting pathway"/>
    <property type="evidence" value="ECO:0000318"/>
    <property type="project" value="GO_Central"/>
</dbReference>
<dbReference type="GO" id="GO:0015031">
    <property type="term" value="P:protein transport"/>
    <property type="evidence" value="ECO:0007669"/>
    <property type="project" value="UniProtKB-KW"/>
</dbReference>
<dbReference type="GO" id="GO:0032801">
    <property type="term" value="P:receptor catabolic process"/>
    <property type="evidence" value="ECO:0000318"/>
    <property type="project" value="GO_Central"/>
</dbReference>
<dbReference type="GO" id="GO:0042058">
    <property type="term" value="P:regulation of epidermal growth factor receptor signaling pathway"/>
    <property type="evidence" value="ECO:0000318"/>
    <property type="project" value="GO_Central"/>
</dbReference>
<dbReference type="GO" id="GO:0046755">
    <property type="term" value="P:viral budding"/>
    <property type="evidence" value="ECO:0000318"/>
    <property type="project" value="GO_Central"/>
</dbReference>
<dbReference type="GO" id="GO:0019075">
    <property type="term" value="P:virus maturation"/>
    <property type="evidence" value="ECO:0000318"/>
    <property type="project" value="GO_Central"/>
</dbReference>
<dbReference type="FunFam" id="2.100.10.50:FF:000002">
    <property type="entry name" value="Multivesicular body subunit 12B"/>
    <property type="match status" value="1"/>
</dbReference>
<dbReference type="Gene3D" id="2.100.10.50">
    <property type="match status" value="1"/>
</dbReference>
<dbReference type="InterPro" id="IPR023341">
    <property type="entry name" value="MABP"/>
</dbReference>
<dbReference type="InterPro" id="IPR040335">
    <property type="entry name" value="MVB12A"/>
</dbReference>
<dbReference type="InterPro" id="IPR018798">
    <property type="entry name" value="MVB12A/B"/>
</dbReference>
<dbReference type="InterPro" id="IPR023340">
    <property type="entry name" value="UMA"/>
</dbReference>
<dbReference type="PANTHER" id="PTHR31612">
    <property type="entry name" value="MULTIVESICULAR BODY SUBUNIT 12A"/>
    <property type="match status" value="1"/>
</dbReference>
<dbReference type="PANTHER" id="PTHR31612:SF2">
    <property type="entry name" value="MULTIVESICULAR BODY SUBUNIT 12A"/>
    <property type="match status" value="1"/>
</dbReference>
<dbReference type="Pfam" id="PF10240">
    <property type="entry name" value="DUF2464"/>
    <property type="match status" value="1"/>
</dbReference>
<dbReference type="PROSITE" id="PS51498">
    <property type="entry name" value="MABP"/>
    <property type="match status" value="1"/>
</dbReference>
<dbReference type="PROSITE" id="PS51497">
    <property type="entry name" value="UMA"/>
    <property type="match status" value="1"/>
</dbReference>
<protein>
    <recommendedName>
        <fullName>Multivesicular body subunit 12A</fullName>
    </recommendedName>
    <alternativeName>
        <fullName>ESCRT-I complex subunit MVB12A</fullName>
    </alternativeName>
    <alternativeName>
        <fullName>Protein FAM125A</fullName>
    </alternativeName>
</protein>
<keyword id="KW-0963">Cytoplasm</keyword>
<keyword id="KW-0967">Endosome</keyword>
<keyword id="KW-0472">Membrane</keyword>
<keyword id="KW-0653">Protein transport</keyword>
<keyword id="KW-1185">Reference proteome</keyword>
<keyword id="KW-0729">SH3-binding</keyword>
<keyword id="KW-0813">Transport</keyword>